<evidence type="ECO:0000250" key="1">
    <source>
        <dbReference type="UniProtKB" id="Q9P0J7"/>
    </source>
</evidence>
<evidence type="ECO:0000255" key="2"/>
<evidence type="ECO:0000255" key="3">
    <source>
        <dbReference type="PROSITE-ProRule" id="PRU00042"/>
    </source>
</evidence>
<evidence type="ECO:0000255" key="4">
    <source>
        <dbReference type="PROSITE-ProRule" id="PRU00228"/>
    </source>
</evidence>
<evidence type="ECO:0000256" key="5">
    <source>
        <dbReference type="SAM" id="MobiDB-lite"/>
    </source>
</evidence>
<evidence type="ECO:0000269" key="6">
    <source>
    </source>
</evidence>
<evidence type="ECO:0000303" key="7">
    <source>
    </source>
</evidence>
<evidence type="ECO:0000305" key="8"/>
<evidence type="ECO:0000312" key="9">
    <source>
        <dbReference type="MGI" id="MGI:1921537"/>
    </source>
</evidence>
<name>KCMF1_MOUSE</name>
<gene>
    <name evidence="9" type="primary">Kcmf1</name>
    <name evidence="7" type="synonym">Debt91</name>
</gene>
<reference key="1">
    <citation type="journal article" date="2003" name="Biochem. Biophys. Res. Commun.">
        <title>Debt91, a putative zinc finger protein differentially expressed during epithelial morphogenesis.</title>
        <authorList>
            <person name="Li Z."/>
            <person name="Stuart R.O."/>
            <person name="Eraly S.A."/>
            <person name="Gittes G."/>
            <person name="Beier D.R."/>
            <person name="Nigam S.K."/>
        </authorList>
    </citation>
    <scope>NUCLEOTIDE SEQUENCE [MRNA] (ISOFORM 2)</scope>
    <scope>INDUCTION</scope>
    <scope>TISSUE SPECIFICITY</scope>
    <scope>DEVELOPMENTAL STAGE</scope>
</reference>
<reference key="2">
    <citation type="journal article" date="2005" name="Science">
        <title>The transcriptional landscape of the mammalian genome.</title>
        <authorList>
            <person name="Carninci P."/>
            <person name="Kasukawa T."/>
            <person name="Katayama S."/>
            <person name="Gough J."/>
            <person name="Frith M.C."/>
            <person name="Maeda N."/>
            <person name="Oyama R."/>
            <person name="Ravasi T."/>
            <person name="Lenhard B."/>
            <person name="Wells C."/>
            <person name="Kodzius R."/>
            <person name="Shimokawa K."/>
            <person name="Bajic V.B."/>
            <person name="Brenner S.E."/>
            <person name="Batalov S."/>
            <person name="Forrest A.R."/>
            <person name="Zavolan M."/>
            <person name="Davis M.J."/>
            <person name="Wilming L.G."/>
            <person name="Aidinis V."/>
            <person name="Allen J.E."/>
            <person name="Ambesi-Impiombato A."/>
            <person name="Apweiler R."/>
            <person name="Aturaliya R.N."/>
            <person name="Bailey T.L."/>
            <person name="Bansal M."/>
            <person name="Baxter L."/>
            <person name="Beisel K.W."/>
            <person name="Bersano T."/>
            <person name="Bono H."/>
            <person name="Chalk A.M."/>
            <person name="Chiu K.P."/>
            <person name="Choudhary V."/>
            <person name="Christoffels A."/>
            <person name="Clutterbuck D.R."/>
            <person name="Crowe M.L."/>
            <person name="Dalla E."/>
            <person name="Dalrymple B.P."/>
            <person name="de Bono B."/>
            <person name="Della Gatta G."/>
            <person name="di Bernardo D."/>
            <person name="Down T."/>
            <person name="Engstrom P."/>
            <person name="Fagiolini M."/>
            <person name="Faulkner G."/>
            <person name="Fletcher C.F."/>
            <person name="Fukushima T."/>
            <person name="Furuno M."/>
            <person name="Futaki S."/>
            <person name="Gariboldi M."/>
            <person name="Georgii-Hemming P."/>
            <person name="Gingeras T.R."/>
            <person name="Gojobori T."/>
            <person name="Green R.E."/>
            <person name="Gustincich S."/>
            <person name="Harbers M."/>
            <person name="Hayashi Y."/>
            <person name="Hensch T.K."/>
            <person name="Hirokawa N."/>
            <person name="Hill D."/>
            <person name="Huminiecki L."/>
            <person name="Iacono M."/>
            <person name="Ikeo K."/>
            <person name="Iwama A."/>
            <person name="Ishikawa T."/>
            <person name="Jakt M."/>
            <person name="Kanapin A."/>
            <person name="Katoh M."/>
            <person name="Kawasawa Y."/>
            <person name="Kelso J."/>
            <person name="Kitamura H."/>
            <person name="Kitano H."/>
            <person name="Kollias G."/>
            <person name="Krishnan S.P."/>
            <person name="Kruger A."/>
            <person name="Kummerfeld S.K."/>
            <person name="Kurochkin I.V."/>
            <person name="Lareau L.F."/>
            <person name="Lazarevic D."/>
            <person name="Lipovich L."/>
            <person name="Liu J."/>
            <person name="Liuni S."/>
            <person name="McWilliam S."/>
            <person name="Madan Babu M."/>
            <person name="Madera M."/>
            <person name="Marchionni L."/>
            <person name="Matsuda H."/>
            <person name="Matsuzawa S."/>
            <person name="Miki H."/>
            <person name="Mignone F."/>
            <person name="Miyake S."/>
            <person name="Morris K."/>
            <person name="Mottagui-Tabar S."/>
            <person name="Mulder N."/>
            <person name="Nakano N."/>
            <person name="Nakauchi H."/>
            <person name="Ng P."/>
            <person name="Nilsson R."/>
            <person name="Nishiguchi S."/>
            <person name="Nishikawa S."/>
            <person name="Nori F."/>
            <person name="Ohara O."/>
            <person name="Okazaki Y."/>
            <person name="Orlando V."/>
            <person name="Pang K.C."/>
            <person name="Pavan W.J."/>
            <person name="Pavesi G."/>
            <person name="Pesole G."/>
            <person name="Petrovsky N."/>
            <person name="Piazza S."/>
            <person name="Reed J."/>
            <person name="Reid J.F."/>
            <person name="Ring B.Z."/>
            <person name="Ringwald M."/>
            <person name="Rost B."/>
            <person name="Ruan Y."/>
            <person name="Salzberg S.L."/>
            <person name="Sandelin A."/>
            <person name="Schneider C."/>
            <person name="Schoenbach C."/>
            <person name="Sekiguchi K."/>
            <person name="Semple C.A."/>
            <person name="Seno S."/>
            <person name="Sessa L."/>
            <person name="Sheng Y."/>
            <person name="Shibata Y."/>
            <person name="Shimada H."/>
            <person name="Shimada K."/>
            <person name="Silva D."/>
            <person name="Sinclair B."/>
            <person name="Sperling S."/>
            <person name="Stupka E."/>
            <person name="Sugiura K."/>
            <person name="Sultana R."/>
            <person name="Takenaka Y."/>
            <person name="Taki K."/>
            <person name="Tammoja K."/>
            <person name="Tan S.L."/>
            <person name="Tang S."/>
            <person name="Taylor M.S."/>
            <person name="Tegner J."/>
            <person name="Teichmann S.A."/>
            <person name="Ueda H.R."/>
            <person name="van Nimwegen E."/>
            <person name="Verardo R."/>
            <person name="Wei C.L."/>
            <person name="Yagi K."/>
            <person name="Yamanishi H."/>
            <person name="Zabarovsky E."/>
            <person name="Zhu S."/>
            <person name="Zimmer A."/>
            <person name="Hide W."/>
            <person name="Bult C."/>
            <person name="Grimmond S.M."/>
            <person name="Teasdale R.D."/>
            <person name="Liu E.T."/>
            <person name="Brusic V."/>
            <person name="Quackenbush J."/>
            <person name="Wahlestedt C."/>
            <person name="Mattick J.S."/>
            <person name="Hume D.A."/>
            <person name="Kai C."/>
            <person name="Sasaki D."/>
            <person name="Tomaru Y."/>
            <person name="Fukuda S."/>
            <person name="Kanamori-Katayama M."/>
            <person name="Suzuki M."/>
            <person name="Aoki J."/>
            <person name="Arakawa T."/>
            <person name="Iida J."/>
            <person name="Imamura K."/>
            <person name="Itoh M."/>
            <person name="Kato T."/>
            <person name="Kawaji H."/>
            <person name="Kawagashira N."/>
            <person name="Kawashima T."/>
            <person name="Kojima M."/>
            <person name="Kondo S."/>
            <person name="Konno H."/>
            <person name="Nakano K."/>
            <person name="Ninomiya N."/>
            <person name="Nishio T."/>
            <person name="Okada M."/>
            <person name="Plessy C."/>
            <person name="Shibata K."/>
            <person name="Shiraki T."/>
            <person name="Suzuki S."/>
            <person name="Tagami M."/>
            <person name="Waki K."/>
            <person name="Watahiki A."/>
            <person name="Okamura-Oho Y."/>
            <person name="Suzuki H."/>
            <person name="Kawai J."/>
            <person name="Hayashizaki Y."/>
        </authorList>
    </citation>
    <scope>NUCLEOTIDE SEQUENCE [LARGE SCALE MRNA] (ISOFORM 1)</scope>
    <source>
        <strain>C57BL/6J</strain>
        <tissue>Stomach</tissue>
    </source>
</reference>
<reference key="3">
    <citation type="journal article" date="2004" name="Genome Res.">
        <title>The status, quality, and expansion of the NIH full-length cDNA project: the Mammalian Gene Collection (MGC).</title>
        <authorList>
            <consortium name="The MGC Project Team"/>
        </authorList>
    </citation>
    <scope>NUCLEOTIDE SEQUENCE [LARGE SCALE MRNA] (ISOFORM 1)</scope>
    <source>
        <tissue>Mammary tumor</tissue>
    </source>
</reference>
<reference key="4">
    <citation type="journal article" date="2010" name="Cell">
        <title>A tissue-specific atlas of mouse protein phosphorylation and expression.</title>
        <authorList>
            <person name="Huttlin E.L."/>
            <person name="Jedrychowski M.P."/>
            <person name="Elias J.E."/>
            <person name="Goswami T."/>
            <person name="Rad R."/>
            <person name="Beausoleil S.A."/>
            <person name="Villen J."/>
            <person name="Haas W."/>
            <person name="Sowa M.E."/>
            <person name="Gygi S.P."/>
        </authorList>
    </citation>
    <scope>IDENTIFICATION BY MASS SPECTROMETRY [LARGE SCALE ANALYSIS]</scope>
    <source>
        <tissue>Brain</tissue>
        <tissue>Testis</tissue>
    </source>
</reference>
<keyword id="KW-0007">Acetylation</keyword>
<keyword id="KW-0025">Alternative splicing</keyword>
<keyword id="KW-0175">Coiled coil</keyword>
<keyword id="KW-0963">Cytoplasm</keyword>
<keyword id="KW-0967">Endosome</keyword>
<keyword id="KW-0458">Lysosome</keyword>
<keyword id="KW-0479">Metal-binding</keyword>
<keyword id="KW-0597">Phosphoprotein</keyword>
<keyword id="KW-1185">Reference proteome</keyword>
<keyword id="KW-0808">Transferase</keyword>
<keyword id="KW-0833">Ubl conjugation pathway</keyword>
<keyword id="KW-0862">Zinc</keyword>
<keyword id="KW-0863">Zinc-finger</keyword>
<proteinExistence type="evidence at protein level"/>
<organism>
    <name type="scientific">Mus musculus</name>
    <name type="common">Mouse</name>
    <dbReference type="NCBI Taxonomy" id="10090"/>
    <lineage>
        <taxon>Eukaryota</taxon>
        <taxon>Metazoa</taxon>
        <taxon>Chordata</taxon>
        <taxon>Craniata</taxon>
        <taxon>Vertebrata</taxon>
        <taxon>Euteleostomi</taxon>
        <taxon>Mammalia</taxon>
        <taxon>Eutheria</taxon>
        <taxon>Euarchontoglires</taxon>
        <taxon>Glires</taxon>
        <taxon>Rodentia</taxon>
        <taxon>Myomorpha</taxon>
        <taxon>Muroidea</taxon>
        <taxon>Muridae</taxon>
        <taxon>Murinae</taxon>
        <taxon>Mus</taxon>
        <taxon>Mus</taxon>
    </lineage>
</organism>
<protein>
    <recommendedName>
        <fullName evidence="8">E3 ubiquitin-protein ligase KCMF1</fullName>
        <ecNumber evidence="1">2.3.2.27</ecNumber>
    </recommendedName>
    <alternativeName>
        <fullName evidence="7">Differentially expressed in branching tubulogenesis 91</fullName>
        <shortName evidence="7">Debt-91</shortName>
    </alternativeName>
</protein>
<feature type="initiator methionine" description="Removed" evidence="1">
    <location>
        <position position="1"/>
    </location>
</feature>
<feature type="chain" id="PRO_0000349220" description="E3 ubiquitin-protein ligase KCMF1">
    <location>
        <begin position="2"/>
        <end position="381"/>
    </location>
</feature>
<feature type="zinc finger region" description="ZZ-type" evidence="4">
    <location>
        <begin position="4"/>
        <end position="60"/>
    </location>
</feature>
<feature type="zinc finger region" description="C2H2-type" evidence="3">
    <location>
        <begin position="78"/>
        <end position="101"/>
    </location>
</feature>
<feature type="region of interest" description="Disordered" evidence="5">
    <location>
        <begin position="154"/>
        <end position="194"/>
    </location>
</feature>
<feature type="coiled-coil region" evidence="2">
    <location>
        <begin position="224"/>
        <end position="259"/>
    </location>
</feature>
<feature type="compositionally biased region" description="Low complexity" evidence="5">
    <location>
        <begin position="175"/>
        <end position="192"/>
    </location>
</feature>
<feature type="binding site" evidence="4">
    <location>
        <position position="9"/>
    </location>
    <ligand>
        <name>Zn(2+)</name>
        <dbReference type="ChEBI" id="CHEBI:29105"/>
        <label>1</label>
    </ligand>
</feature>
<feature type="binding site" evidence="4">
    <location>
        <position position="12"/>
    </location>
    <ligand>
        <name>Zn(2+)</name>
        <dbReference type="ChEBI" id="CHEBI:29105"/>
        <label>1</label>
    </ligand>
</feature>
<feature type="binding site" evidence="4">
    <location>
        <position position="24"/>
    </location>
    <ligand>
        <name>Zn(2+)</name>
        <dbReference type="ChEBI" id="CHEBI:29105"/>
        <label>2</label>
    </ligand>
</feature>
<feature type="binding site" evidence="4">
    <location>
        <position position="27"/>
    </location>
    <ligand>
        <name>Zn(2+)</name>
        <dbReference type="ChEBI" id="CHEBI:29105"/>
        <label>2</label>
    </ligand>
</feature>
<feature type="binding site" evidence="4">
    <location>
        <position position="33"/>
    </location>
    <ligand>
        <name>Zn(2+)</name>
        <dbReference type="ChEBI" id="CHEBI:29105"/>
        <label>1</label>
    </ligand>
</feature>
<feature type="binding site" evidence="4">
    <location>
        <position position="36"/>
    </location>
    <ligand>
        <name>Zn(2+)</name>
        <dbReference type="ChEBI" id="CHEBI:29105"/>
        <label>1</label>
    </ligand>
</feature>
<feature type="binding site" evidence="4">
    <location>
        <position position="46"/>
    </location>
    <ligand>
        <name>Zn(2+)</name>
        <dbReference type="ChEBI" id="CHEBI:29105"/>
        <label>2</label>
    </ligand>
</feature>
<feature type="binding site" evidence="4">
    <location>
        <position position="50"/>
    </location>
    <ligand>
        <name>Zn(2+)</name>
        <dbReference type="ChEBI" id="CHEBI:29105"/>
        <label>2</label>
    </ligand>
</feature>
<feature type="modified residue" description="N-acetylserine" evidence="1">
    <location>
        <position position="2"/>
    </location>
</feature>
<feature type="modified residue" description="Phosphoserine" evidence="1">
    <location>
        <position position="2"/>
    </location>
</feature>
<feature type="modified residue" description="Phosphoserine" evidence="1">
    <location>
        <position position="169"/>
    </location>
</feature>
<feature type="modified residue" description="Phosphoserine" evidence="1">
    <location>
        <position position="189"/>
    </location>
</feature>
<feature type="modified residue" description="Phosphoserine" evidence="1">
    <location>
        <position position="212"/>
    </location>
</feature>
<feature type="modified residue" description="Phosphoserine" evidence="1">
    <location>
        <position position="335"/>
    </location>
</feature>
<feature type="modified residue" description="Phosphoserine" evidence="1">
    <location>
        <position position="336"/>
    </location>
</feature>
<feature type="splice variant" id="VSP_035227" description="In isoform 2." evidence="7">
    <location>
        <begin position="1"/>
        <end position="85"/>
    </location>
</feature>
<dbReference type="EC" id="2.3.2.27" evidence="1"/>
<dbReference type="EMBL" id="AF143859">
    <property type="protein sequence ID" value="AAD31040.1"/>
    <property type="molecule type" value="mRNA"/>
</dbReference>
<dbReference type="EMBL" id="AK142436">
    <property type="protein sequence ID" value="BAE25063.1"/>
    <property type="molecule type" value="mRNA"/>
</dbReference>
<dbReference type="EMBL" id="BC043330">
    <property type="protein sequence ID" value="AAH43330.1"/>
    <property type="molecule type" value="mRNA"/>
</dbReference>
<dbReference type="CCDS" id="CCDS39518.1">
    <molecule id="Q80UY2-1"/>
</dbReference>
<dbReference type="RefSeq" id="NP_062689.2">
    <molecule id="Q80UY2-1"/>
    <property type="nucleotide sequence ID" value="NM_019715.2"/>
</dbReference>
<dbReference type="SMR" id="Q80UY2"/>
<dbReference type="BioGRID" id="216636">
    <property type="interactions" value="2"/>
</dbReference>
<dbReference type="FunCoup" id="Q80UY2">
    <property type="interactions" value="1971"/>
</dbReference>
<dbReference type="IntAct" id="Q80UY2">
    <property type="interactions" value="1"/>
</dbReference>
<dbReference type="STRING" id="10090.ENSMUSP00000064410"/>
<dbReference type="GlyGen" id="Q80UY2">
    <property type="glycosylation" value="1 site, 1 O-linked glycan (1 site)"/>
</dbReference>
<dbReference type="iPTMnet" id="Q80UY2"/>
<dbReference type="PhosphoSitePlus" id="Q80UY2"/>
<dbReference type="SwissPalm" id="Q80UY2"/>
<dbReference type="jPOST" id="Q80UY2"/>
<dbReference type="PaxDb" id="10090-ENSMUSP00000064410"/>
<dbReference type="PeptideAtlas" id="Q80UY2"/>
<dbReference type="ProteomicsDB" id="263490">
    <molecule id="Q80UY2-1"/>
</dbReference>
<dbReference type="ProteomicsDB" id="263491">
    <molecule id="Q80UY2-2"/>
</dbReference>
<dbReference type="Pumba" id="Q80UY2"/>
<dbReference type="Antibodypedia" id="31781">
    <property type="antibodies" value="141 antibodies from 18 providers"/>
</dbReference>
<dbReference type="DNASU" id="74287"/>
<dbReference type="Ensembl" id="ENSMUST00000068697.11">
    <molecule id="Q80UY2-1"/>
    <property type="protein sequence ID" value="ENSMUSP00000064410.9"/>
    <property type="gene ID" value="ENSMUSG00000055239.11"/>
</dbReference>
<dbReference type="GeneID" id="74287"/>
<dbReference type="KEGG" id="mmu:74287"/>
<dbReference type="UCSC" id="uc009cjd.1">
    <molecule id="Q80UY2-1"/>
    <property type="organism name" value="mouse"/>
</dbReference>
<dbReference type="AGR" id="MGI:1921537"/>
<dbReference type="CTD" id="56888"/>
<dbReference type="MGI" id="MGI:1921537">
    <property type="gene designation" value="Kcmf1"/>
</dbReference>
<dbReference type="VEuPathDB" id="HostDB:ENSMUSG00000055239"/>
<dbReference type="eggNOG" id="KOG1280">
    <property type="taxonomic scope" value="Eukaryota"/>
</dbReference>
<dbReference type="GeneTree" id="ENSGT00510000047171"/>
<dbReference type="HOGENOM" id="CLU_032080_1_1_1"/>
<dbReference type="InParanoid" id="Q80UY2"/>
<dbReference type="OMA" id="GRNQSTE"/>
<dbReference type="OrthoDB" id="7873042at2759"/>
<dbReference type="PhylomeDB" id="Q80UY2"/>
<dbReference type="TreeFam" id="TF318128"/>
<dbReference type="Reactome" id="R-MMU-6798695">
    <property type="pathway name" value="Neutrophil degranulation"/>
</dbReference>
<dbReference type="UniPathway" id="UPA00143"/>
<dbReference type="BioGRID-ORCS" id="74287">
    <property type="hits" value="19 hits in 77 CRISPR screens"/>
</dbReference>
<dbReference type="ChiTaRS" id="Kcmf1">
    <property type="organism name" value="mouse"/>
</dbReference>
<dbReference type="PRO" id="PR:Q80UY2"/>
<dbReference type="Proteomes" id="UP000000589">
    <property type="component" value="Chromosome 6"/>
</dbReference>
<dbReference type="RNAct" id="Q80UY2">
    <property type="molecule type" value="protein"/>
</dbReference>
<dbReference type="Bgee" id="ENSMUSG00000055239">
    <property type="expression patterns" value="Expressed in spermatid and 238 other cell types or tissues"/>
</dbReference>
<dbReference type="ExpressionAtlas" id="Q80UY2">
    <property type="expression patterns" value="baseline and differential"/>
</dbReference>
<dbReference type="GO" id="GO:0005829">
    <property type="term" value="C:cytosol"/>
    <property type="evidence" value="ECO:0007669"/>
    <property type="project" value="Ensembl"/>
</dbReference>
<dbReference type="GO" id="GO:0005770">
    <property type="term" value="C:late endosome"/>
    <property type="evidence" value="ECO:0007669"/>
    <property type="project" value="UniProtKB-SubCell"/>
</dbReference>
<dbReference type="GO" id="GO:0005764">
    <property type="term" value="C:lysosome"/>
    <property type="evidence" value="ECO:0007669"/>
    <property type="project" value="UniProtKB-SubCell"/>
</dbReference>
<dbReference type="GO" id="GO:0061630">
    <property type="term" value="F:ubiquitin protein ligase activity"/>
    <property type="evidence" value="ECO:0000266"/>
    <property type="project" value="MGI"/>
</dbReference>
<dbReference type="GO" id="GO:0008270">
    <property type="term" value="F:zinc ion binding"/>
    <property type="evidence" value="ECO:0007669"/>
    <property type="project" value="UniProtKB-KW"/>
</dbReference>
<dbReference type="GO" id="GO:0141191">
    <property type="term" value="P:negative regulation of HRI-mediated signaling"/>
    <property type="evidence" value="ECO:0000250"/>
    <property type="project" value="UniProtKB"/>
</dbReference>
<dbReference type="GO" id="GO:0043161">
    <property type="term" value="P:proteasome-mediated ubiquitin-dependent protein catabolic process"/>
    <property type="evidence" value="ECO:0007669"/>
    <property type="project" value="Ensembl"/>
</dbReference>
<dbReference type="GO" id="GO:0070936">
    <property type="term" value="P:protein K48-linked ubiquitination"/>
    <property type="evidence" value="ECO:0007669"/>
    <property type="project" value="Ensembl"/>
</dbReference>
<dbReference type="GO" id="GO:0070534">
    <property type="term" value="P:protein K63-linked ubiquitination"/>
    <property type="evidence" value="ECO:0000250"/>
    <property type="project" value="UniProtKB"/>
</dbReference>
<dbReference type="GO" id="GO:0016567">
    <property type="term" value="P:protein ubiquitination"/>
    <property type="evidence" value="ECO:0000266"/>
    <property type="project" value="MGI"/>
</dbReference>
<dbReference type="GO" id="GO:0006979">
    <property type="term" value="P:response to oxidative stress"/>
    <property type="evidence" value="ECO:0007669"/>
    <property type="project" value="Ensembl"/>
</dbReference>
<dbReference type="CDD" id="cd02338">
    <property type="entry name" value="ZZ_PCMF_like"/>
    <property type="match status" value="1"/>
</dbReference>
<dbReference type="FunFam" id="3.30.60.90:FF:000017">
    <property type="entry name" value="E3 ubiquitin-protein ligase KCMF1"/>
    <property type="match status" value="1"/>
</dbReference>
<dbReference type="Gene3D" id="3.30.60.90">
    <property type="match status" value="1"/>
</dbReference>
<dbReference type="InterPro" id="IPR008598">
    <property type="entry name" value="Di19_Zn-bd"/>
</dbReference>
<dbReference type="InterPro" id="IPR050774">
    <property type="entry name" value="KCMF1/Dystrophin"/>
</dbReference>
<dbReference type="InterPro" id="IPR013087">
    <property type="entry name" value="Znf_C2H2_type"/>
</dbReference>
<dbReference type="InterPro" id="IPR000433">
    <property type="entry name" value="Znf_ZZ"/>
</dbReference>
<dbReference type="InterPro" id="IPR043145">
    <property type="entry name" value="Znf_ZZ_sf"/>
</dbReference>
<dbReference type="PANTHER" id="PTHR12268">
    <property type="entry name" value="E3 UBIQUITIN-PROTEIN LIGASE KCMF1"/>
    <property type="match status" value="1"/>
</dbReference>
<dbReference type="PANTHER" id="PTHR12268:SF13">
    <property type="entry name" value="E3 UBIQUITIN-PROTEIN LIGASE KCMF1"/>
    <property type="match status" value="1"/>
</dbReference>
<dbReference type="Pfam" id="PF05605">
    <property type="entry name" value="zf-Di19"/>
    <property type="match status" value="1"/>
</dbReference>
<dbReference type="Pfam" id="PF00569">
    <property type="entry name" value="ZZ"/>
    <property type="match status" value="1"/>
</dbReference>
<dbReference type="SMART" id="SM00355">
    <property type="entry name" value="ZnF_C2H2"/>
    <property type="match status" value="1"/>
</dbReference>
<dbReference type="SMART" id="SM00291">
    <property type="entry name" value="ZnF_ZZ"/>
    <property type="match status" value="1"/>
</dbReference>
<dbReference type="SUPFAM" id="SSF57850">
    <property type="entry name" value="RING/U-box"/>
    <property type="match status" value="1"/>
</dbReference>
<dbReference type="PROSITE" id="PS01357">
    <property type="entry name" value="ZF_ZZ_1"/>
    <property type="match status" value="1"/>
</dbReference>
<dbReference type="PROSITE" id="PS50135">
    <property type="entry name" value="ZF_ZZ_2"/>
    <property type="match status" value="1"/>
</dbReference>
<dbReference type="PROSITE" id="PS50157">
    <property type="entry name" value="ZINC_FINGER_C2H2_2"/>
    <property type="match status" value="1"/>
</dbReference>
<accession>Q80UY2</accession>
<accession>Q9WUM2</accession>
<sequence>MSRHEGVSCDACLKGNFRGRRYKCLICYDYDLCASCYESGATTTRHTTDHPMQCILTRVDFDLYYGGEAFSVEQPQSFTCPYCGKMGYTETSLQEHVTSEHAETSTEVICPICAALPGGDPNHVTDDFAAHLTLEHRAPRDLDESSGVRHVRRMFHPGRGLGGPRARRSNMHFTSSSTGGLSSSQSSYSPSSREAMDPIAELLSQLSGVRRSAGGQLNSSGPSASQLQQLQMQLQLERQHAQAARQQLETARNASRRTNTSSVTTTITQATATANTANTENSPQALHNSQFLLTRLNDPKMSEAERQSMESERADRSLFVQELLLSTLVREESSSSDEDDRGEMADFGAMGCVDIMPLDVALENLNLKESNKGNEPPPPPL</sequence>
<comment type="function">
    <text evidence="1">E3 ubiquitin-protein ligase which accepts ubiquitin from an E2 ubiquitin-conjugating enzyme and then transfers it to targeted substrates, promoting their degradation by the proteasome. Together with UBR4, component of the N-end rule pathway: ubiquitinates proteins bearing specific N-terminal residues that are destabilizing according to the N-end rule, leading to their degradation. Does not ubiquitinate proteins that are acetylated at the N-terminus. Together with UBR4, part of a protein quality control pathway that catalyzes ubiquitination and degradation of proteins that have been oxidized in response to reactive oxygen species (ROS): recognizes proteins with an Arg-CysO3(H) degron at the N-terminus, and mediates assembly of heterotypic 'Lys-63'-/'Lys-27'-linked branched ubiquitin chains on oxidized proteins, leading to their degradation by autophagy. Catalytic component of the SIFI complex, a multiprotein complex required to inhibit the mitochondrial stress response after a specific stress event has been resolved: ubiquitinates and degrades (1) components of the HRI-mediated signaling of the integrated stress response, such as DELE1 and EIF2AK1/HRI, as well as (2) unimported mitochondrial precursors. Within the SIFI complex, UBR4 initiates ubiquitin chain that are further elongated or branched by KCMF1.</text>
</comment>
<comment type="catalytic activity">
    <reaction evidence="1">
        <text>S-ubiquitinyl-[E2 ubiquitin-conjugating enzyme]-L-cysteine + [acceptor protein]-L-lysine = [E2 ubiquitin-conjugating enzyme]-L-cysteine + N(6)-ubiquitinyl-[acceptor protein]-L-lysine.</text>
        <dbReference type="EC" id="2.3.2.27"/>
    </reaction>
</comment>
<comment type="pathway">
    <text evidence="1">Protein modification; protein ubiquitination.</text>
</comment>
<comment type="subunit">
    <text evidence="1">Component of the SIFI complex, composed of KCMF1, UBR4 and calmodulin (CALM1, CALM2 or CALM3).</text>
</comment>
<comment type="subcellular location">
    <subcellularLocation>
        <location evidence="1">Cytoplasm</location>
    </subcellularLocation>
    <subcellularLocation>
        <location evidence="1">Late endosome</location>
    </subcellularLocation>
    <subcellularLocation>
        <location evidence="1">Lysosome</location>
    </subcellularLocation>
</comment>
<comment type="alternative products">
    <event type="alternative splicing"/>
    <isoform>
        <id>Q80UY2-1</id>
        <name>1</name>
        <sequence type="displayed"/>
    </isoform>
    <isoform>
        <id>Q80UY2-2</id>
        <name>2</name>
        <sequence type="described" ref="VSP_035227"/>
    </isoform>
</comment>
<comment type="tissue specificity">
    <text evidence="6">Testis, liver, kidney, heart and skeletal muscle.</text>
</comment>
<comment type="developmental stage">
    <text evidence="6">Expressed throughout embryonic development, with much higher expression after day 15, when many organs including the kidney are undergoing extensive branching morphogenesis.</text>
</comment>
<comment type="induction">
    <text evidence="6">Up-regulated during growth factor-induced branching tubulogenesis.</text>
</comment>
<comment type="similarity">
    <text evidence="8">Belongs to the KCMF1 family.</text>
</comment>